<accession>Q7A5Q8</accession>
<organism>
    <name type="scientific">Staphylococcus aureus (strain N315)</name>
    <dbReference type="NCBI Taxonomy" id="158879"/>
    <lineage>
        <taxon>Bacteria</taxon>
        <taxon>Bacillati</taxon>
        <taxon>Bacillota</taxon>
        <taxon>Bacilli</taxon>
        <taxon>Bacillales</taxon>
        <taxon>Staphylococcaceae</taxon>
        <taxon>Staphylococcus</taxon>
    </lineage>
</organism>
<reference key="1">
    <citation type="journal article" date="2001" name="Lancet">
        <title>Whole genome sequencing of meticillin-resistant Staphylococcus aureus.</title>
        <authorList>
            <person name="Kuroda M."/>
            <person name="Ohta T."/>
            <person name="Uchiyama I."/>
            <person name="Baba T."/>
            <person name="Yuzawa H."/>
            <person name="Kobayashi I."/>
            <person name="Cui L."/>
            <person name="Oguchi A."/>
            <person name="Aoki K."/>
            <person name="Nagai Y."/>
            <person name="Lian J.-Q."/>
            <person name="Ito T."/>
            <person name="Kanamori M."/>
            <person name="Matsumaru H."/>
            <person name="Maruyama A."/>
            <person name="Murakami H."/>
            <person name="Hosoyama A."/>
            <person name="Mizutani-Ui Y."/>
            <person name="Takahashi N.K."/>
            <person name="Sawano T."/>
            <person name="Inoue R."/>
            <person name="Kaito C."/>
            <person name="Sekimizu K."/>
            <person name="Hirakawa H."/>
            <person name="Kuhara S."/>
            <person name="Goto S."/>
            <person name="Yabuzaki J."/>
            <person name="Kanehisa M."/>
            <person name="Yamashita A."/>
            <person name="Oshima K."/>
            <person name="Furuya K."/>
            <person name="Yoshino C."/>
            <person name="Shiba T."/>
            <person name="Hattori M."/>
            <person name="Ogasawara N."/>
            <person name="Hayashi H."/>
            <person name="Hiramatsu K."/>
        </authorList>
    </citation>
    <scope>NUCLEOTIDE SEQUENCE [LARGE SCALE GENOMIC DNA]</scope>
    <source>
        <strain>N315</strain>
    </source>
</reference>
<feature type="chain" id="PRO_0000276798" description="Nickel import system ATP-binding protein NikD">
    <location>
        <begin position="1"/>
        <end position="257"/>
    </location>
</feature>
<feature type="domain" description="ABC transporter" evidence="2">
    <location>
        <begin position="4"/>
        <end position="245"/>
    </location>
</feature>
<feature type="binding site" evidence="2">
    <location>
        <begin position="37"/>
        <end position="44"/>
    </location>
    <ligand>
        <name>ATP</name>
        <dbReference type="ChEBI" id="CHEBI:30616"/>
    </ligand>
</feature>
<keyword id="KW-0067">ATP-binding</keyword>
<keyword id="KW-1003">Cell membrane</keyword>
<keyword id="KW-0406">Ion transport</keyword>
<keyword id="KW-0472">Membrane</keyword>
<keyword id="KW-0533">Nickel</keyword>
<keyword id="KW-0921">Nickel transport</keyword>
<keyword id="KW-0547">Nucleotide-binding</keyword>
<keyword id="KW-1278">Translocase</keyword>
<keyword id="KW-0813">Transport</keyword>
<evidence type="ECO:0000250" key="1">
    <source>
        <dbReference type="UniProtKB" id="Q2FYQ7"/>
    </source>
</evidence>
<evidence type="ECO:0000255" key="2">
    <source>
        <dbReference type="PROSITE-ProRule" id="PRU00434"/>
    </source>
</evidence>
<evidence type="ECO:0000305" key="3"/>
<protein>
    <recommendedName>
        <fullName evidence="1">Nickel import system ATP-binding protein NikD</fullName>
        <ecNumber evidence="1">7.2.2.11</ecNumber>
    </recommendedName>
</protein>
<proteinExistence type="inferred from homology"/>
<gene>
    <name evidence="1" type="primary">nikD</name>
    <name type="synonym">oppD2</name>
    <name type="ordered locus">SA1212</name>
</gene>
<comment type="function">
    <text evidence="1">Part of the ABC transporter complex NikABCDE (Opp2) involved in nickel import. Probably responsible for energy coupling to the transport system.</text>
</comment>
<comment type="catalytic activity">
    <reaction evidence="1">
        <text>Ni(2+)(out) + ATP + H2O = Ni(2+)(in) + ADP + phosphate + H(+)</text>
        <dbReference type="Rhea" id="RHEA:15557"/>
        <dbReference type="ChEBI" id="CHEBI:15377"/>
        <dbReference type="ChEBI" id="CHEBI:15378"/>
        <dbReference type="ChEBI" id="CHEBI:30616"/>
        <dbReference type="ChEBI" id="CHEBI:43474"/>
        <dbReference type="ChEBI" id="CHEBI:49786"/>
        <dbReference type="ChEBI" id="CHEBI:456216"/>
        <dbReference type="EC" id="7.2.2.11"/>
    </reaction>
    <physiologicalReaction direction="left-to-right" evidence="1">
        <dbReference type="Rhea" id="RHEA:15558"/>
    </physiologicalReaction>
</comment>
<comment type="subunit">
    <text evidence="1">The complex is composed of two ATP-binding proteins (NikD and NikE), two transmembrane proteins (NikB and NikC) and a solute-binding protein (NikA).</text>
</comment>
<comment type="subcellular location">
    <subcellularLocation>
        <location evidence="3">Cell membrane</location>
        <topology evidence="3">Peripheral membrane protein</topology>
    </subcellularLocation>
</comment>
<comment type="similarity">
    <text evidence="3">Belongs to the ABC transporter superfamily.</text>
</comment>
<dbReference type="EC" id="7.2.2.11" evidence="1"/>
<dbReference type="EMBL" id="BA000018">
    <property type="protein sequence ID" value="BAB42472.1"/>
    <property type="molecule type" value="Genomic_DNA"/>
</dbReference>
<dbReference type="PIR" id="D89914">
    <property type="entry name" value="D89914"/>
</dbReference>
<dbReference type="RefSeq" id="WP_000052315.1">
    <property type="nucleotide sequence ID" value="NC_002745.2"/>
</dbReference>
<dbReference type="SMR" id="Q7A5Q8"/>
<dbReference type="EnsemblBacteria" id="BAB42472">
    <property type="protein sequence ID" value="BAB42472"/>
    <property type="gene ID" value="BAB42472"/>
</dbReference>
<dbReference type="KEGG" id="sau:SA1212"/>
<dbReference type="HOGENOM" id="CLU_000604_1_23_9"/>
<dbReference type="GO" id="GO:0005886">
    <property type="term" value="C:plasma membrane"/>
    <property type="evidence" value="ECO:0007669"/>
    <property type="project" value="UniProtKB-SubCell"/>
</dbReference>
<dbReference type="GO" id="GO:0015413">
    <property type="term" value="F:ABC-type nickel transporter activity"/>
    <property type="evidence" value="ECO:0007669"/>
    <property type="project" value="UniProtKB-EC"/>
</dbReference>
<dbReference type="GO" id="GO:0005524">
    <property type="term" value="F:ATP binding"/>
    <property type="evidence" value="ECO:0007669"/>
    <property type="project" value="UniProtKB-KW"/>
</dbReference>
<dbReference type="GO" id="GO:0016887">
    <property type="term" value="F:ATP hydrolysis activity"/>
    <property type="evidence" value="ECO:0007669"/>
    <property type="project" value="InterPro"/>
</dbReference>
<dbReference type="FunFam" id="3.40.50.300:FF:001826">
    <property type="entry name" value="Nickel import system ATP-binding protein NikD"/>
    <property type="match status" value="1"/>
</dbReference>
<dbReference type="Gene3D" id="3.40.50.300">
    <property type="entry name" value="P-loop containing nucleotide triphosphate hydrolases"/>
    <property type="match status" value="1"/>
</dbReference>
<dbReference type="InterPro" id="IPR003593">
    <property type="entry name" value="AAA+_ATPase"/>
</dbReference>
<dbReference type="InterPro" id="IPR050388">
    <property type="entry name" value="ABC_Ni/Peptide_Import"/>
</dbReference>
<dbReference type="InterPro" id="IPR003439">
    <property type="entry name" value="ABC_transporter-like_ATP-bd"/>
</dbReference>
<dbReference type="InterPro" id="IPR027417">
    <property type="entry name" value="P-loop_NTPase"/>
</dbReference>
<dbReference type="PANTHER" id="PTHR43297:SF13">
    <property type="entry name" value="NICKEL ABC TRANSPORTER, ATP-BINDING PROTEIN"/>
    <property type="match status" value="1"/>
</dbReference>
<dbReference type="PANTHER" id="PTHR43297">
    <property type="entry name" value="OLIGOPEPTIDE TRANSPORT ATP-BINDING PROTEIN APPD"/>
    <property type="match status" value="1"/>
</dbReference>
<dbReference type="Pfam" id="PF00005">
    <property type="entry name" value="ABC_tran"/>
    <property type="match status" value="1"/>
</dbReference>
<dbReference type="SMART" id="SM00382">
    <property type="entry name" value="AAA"/>
    <property type="match status" value="1"/>
</dbReference>
<dbReference type="SUPFAM" id="SSF52540">
    <property type="entry name" value="P-loop containing nucleoside triphosphate hydrolases"/>
    <property type="match status" value="1"/>
</dbReference>
<dbReference type="PROSITE" id="PS50893">
    <property type="entry name" value="ABC_TRANSPORTER_2"/>
    <property type="match status" value="1"/>
</dbReference>
<sequence>MSLIDIQNLTIKNTCEKYLIKGIDLKIFSQQINALIGESGAGKSLIAKALLEYLPFDLSCTYDSYQFDGENISRLSQYYGHTIGYISQNYAESFNDHTKLGKQLTAIYRKHYKSSKEEALSKIDKALSWVNLQSKDILNKYSFQLSGGQLERVYIASVLMLEPKLIIADEPVASLDALNGNQVMDLLQHIVLEHGQTLFIITHNLSHVLKYCQYIYVLKEGQIIERGNINHFKYEHLHPYTERLIKYRTQLKRDYYD</sequence>
<name>NIKD_STAAN</name>